<dbReference type="EC" id="2.7.4.22" evidence="1"/>
<dbReference type="EMBL" id="AE001437">
    <property type="protein sequence ID" value="AAK79754.1"/>
    <property type="molecule type" value="Genomic_DNA"/>
</dbReference>
<dbReference type="PIR" id="G97120">
    <property type="entry name" value="G97120"/>
</dbReference>
<dbReference type="RefSeq" id="NP_348414.1">
    <property type="nucleotide sequence ID" value="NC_003030.1"/>
</dbReference>
<dbReference type="RefSeq" id="WP_010965095.1">
    <property type="nucleotide sequence ID" value="NC_003030.1"/>
</dbReference>
<dbReference type="SMR" id="Q97I64"/>
<dbReference type="STRING" id="272562.CA_C1789"/>
<dbReference type="GeneID" id="44998283"/>
<dbReference type="KEGG" id="cac:CA_C1789"/>
<dbReference type="PATRIC" id="fig|272562.8.peg.1995"/>
<dbReference type="eggNOG" id="COG0528">
    <property type="taxonomic scope" value="Bacteria"/>
</dbReference>
<dbReference type="HOGENOM" id="CLU_033861_0_0_9"/>
<dbReference type="OrthoDB" id="9807458at2"/>
<dbReference type="UniPathway" id="UPA00159">
    <property type="reaction ID" value="UER00275"/>
</dbReference>
<dbReference type="Proteomes" id="UP000000814">
    <property type="component" value="Chromosome"/>
</dbReference>
<dbReference type="GO" id="GO:0005737">
    <property type="term" value="C:cytoplasm"/>
    <property type="evidence" value="ECO:0007669"/>
    <property type="project" value="UniProtKB-SubCell"/>
</dbReference>
<dbReference type="GO" id="GO:0005524">
    <property type="term" value="F:ATP binding"/>
    <property type="evidence" value="ECO:0007669"/>
    <property type="project" value="UniProtKB-KW"/>
</dbReference>
<dbReference type="GO" id="GO:0033862">
    <property type="term" value="F:UMP kinase activity"/>
    <property type="evidence" value="ECO:0007669"/>
    <property type="project" value="UniProtKB-EC"/>
</dbReference>
<dbReference type="GO" id="GO:0044210">
    <property type="term" value="P:'de novo' CTP biosynthetic process"/>
    <property type="evidence" value="ECO:0007669"/>
    <property type="project" value="UniProtKB-UniRule"/>
</dbReference>
<dbReference type="GO" id="GO:0006225">
    <property type="term" value="P:UDP biosynthetic process"/>
    <property type="evidence" value="ECO:0007669"/>
    <property type="project" value="TreeGrafter"/>
</dbReference>
<dbReference type="CDD" id="cd04254">
    <property type="entry name" value="AAK_UMPK-PyrH-Ec"/>
    <property type="match status" value="1"/>
</dbReference>
<dbReference type="FunFam" id="3.40.1160.10:FF:000001">
    <property type="entry name" value="Uridylate kinase"/>
    <property type="match status" value="1"/>
</dbReference>
<dbReference type="Gene3D" id="3.40.1160.10">
    <property type="entry name" value="Acetylglutamate kinase-like"/>
    <property type="match status" value="1"/>
</dbReference>
<dbReference type="HAMAP" id="MF_01220_B">
    <property type="entry name" value="PyrH_B"/>
    <property type="match status" value="1"/>
</dbReference>
<dbReference type="InterPro" id="IPR036393">
    <property type="entry name" value="AceGlu_kinase-like_sf"/>
</dbReference>
<dbReference type="InterPro" id="IPR001048">
    <property type="entry name" value="Asp/Glu/Uridylate_kinase"/>
</dbReference>
<dbReference type="InterPro" id="IPR001057">
    <property type="entry name" value="Glu/AcGlu_kinase"/>
</dbReference>
<dbReference type="InterPro" id="IPR011817">
    <property type="entry name" value="Uridylate_kinase"/>
</dbReference>
<dbReference type="InterPro" id="IPR015963">
    <property type="entry name" value="Uridylate_kinase_bac"/>
</dbReference>
<dbReference type="NCBIfam" id="TIGR02075">
    <property type="entry name" value="pyrH_bact"/>
    <property type="match status" value="1"/>
</dbReference>
<dbReference type="PANTHER" id="PTHR42833">
    <property type="entry name" value="URIDYLATE KINASE"/>
    <property type="match status" value="1"/>
</dbReference>
<dbReference type="PANTHER" id="PTHR42833:SF4">
    <property type="entry name" value="URIDYLATE KINASE PUMPKIN, CHLOROPLASTIC"/>
    <property type="match status" value="1"/>
</dbReference>
<dbReference type="Pfam" id="PF00696">
    <property type="entry name" value="AA_kinase"/>
    <property type="match status" value="1"/>
</dbReference>
<dbReference type="PIRSF" id="PIRSF005650">
    <property type="entry name" value="Uridylate_kin"/>
    <property type="match status" value="1"/>
</dbReference>
<dbReference type="PRINTS" id="PR00474">
    <property type="entry name" value="GLU5KINASE"/>
</dbReference>
<dbReference type="SUPFAM" id="SSF53633">
    <property type="entry name" value="Carbamate kinase-like"/>
    <property type="match status" value="1"/>
</dbReference>
<sequence>MQSIKYKRVMLKISGEALAGTNGYGIDFEVANRIAKEIKEIVDLGIEVGAVVGGGNIWRGRNGKGMDRTTADYMGMLATCINALALQDSLENMDVDTRVQTAIEMKQVAEPFIRRRAMRHLEKGRVVIFAGGTGNPYFSTDTTAALRAAEIEADVILLAKKVDGVYDKDPHKYDDAIKFDNLTYMEVLEKNLQVMDSTATSLCMDNNIPIIVFGLDVSGNIRKAVLGEKIGTIVSK</sequence>
<comment type="function">
    <text evidence="1">Catalyzes the reversible phosphorylation of UMP to UDP.</text>
</comment>
<comment type="catalytic activity">
    <reaction evidence="1">
        <text>UMP + ATP = UDP + ADP</text>
        <dbReference type="Rhea" id="RHEA:24400"/>
        <dbReference type="ChEBI" id="CHEBI:30616"/>
        <dbReference type="ChEBI" id="CHEBI:57865"/>
        <dbReference type="ChEBI" id="CHEBI:58223"/>
        <dbReference type="ChEBI" id="CHEBI:456216"/>
        <dbReference type="EC" id="2.7.4.22"/>
    </reaction>
</comment>
<comment type="activity regulation">
    <text evidence="1">Allosterically activated by GTP. Inhibited by UTP.</text>
</comment>
<comment type="pathway">
    <text evidence="1">Pyrimidine metabolism; CTP biosynthesis via de novo pathway; UDP from UMP (UMPK route): step 1/1.</text>
</comment>
<comment type="subunit">
    <text evidence="1">Homohexamer.</text>
</comment>
<comment type="subcellular location">
    <subcellularLocation>
        <location evidence="1">Cytoplasm</location>
    </subcellularLocation>
</comment>
<comment type="similarity">
    <text evidence="1">Belongs to the UMP kinase family.</text>
</comment>
<protein>
    <recommendedName>
        <fullName evidence="1">Uridylate kinase</fullName>
        <shortName evidence="1">UK</shortName>
        <ecNumber evidence="1">2.7.4.22</ecNumber>
    </recommendedName>
    <alternativeName>
        <fullName evidence="1">Uridine monophosphate kinase</fullName>
        <shortName evidence="1">UMP kinase</shortName>
        <shortName evidence="1">UMPK</shortName>
    </alternativeName>
</protein>
<name>PYRH_CLOAB</name>
<gene>
    <name evidence="1" type="primary">pyrH</name>
    <name type="ordered locus">CA_C1789</name>
</gene>
<keyword id="KW-0021">Allosteric enzyme</keyword>
<keyword id="KW-0067">ATP-binding</keyword>
<keyword id="KW-0963">Cytoplasm</keyword>
<keyword id="KW-0418">Kinase</keyword>
<keyword id="KW-0547">Nucleotide-binding</keyword>
<keyword id="KW-0665">Pyrimidine biosynthesis</keyword>
<keyword id="KW-1185">Reference proteome</keyword>
<keyword id="KW-0808">Transferase</keyword>
<organism>
    <name type="scientific">Clostridium acetobutylicum (strain ATCC 824 / DSM 792 / JCM 1419 / IAM 19013 / LMG 5710 / NBRC 13948 / NRRL B-527 / VKM B-1787 / 2291 / W)</name>
    <dbReference type="NCBI Taxonomy" id="272562"/>
    <lineage>
        <taxon>Bacteria</taxon>
        <taxon>Bacillati</taxon>
        <taxon>Bacillota</taxon>
        <taxon>Clostridia</taxon>
        <taxon>Eubacteriales</taxon>
        <taxon>Clostridiaceae</taxon>
        <taxon>Clostridium</taxon>
    </lineage>
</organism>
<reference key="1">
    <citation type="journal article" date="2001" name="J. Bacteriol.">
        <title>Genome sequence and comparative analysis of the solvent-producing bacterium Clostridium acetobutylicum.</title>
        <authorList>
            <person name="Noelling J."/>
            <person name="Breton G."/>
            <person name="Omelchenko M.V."/>
            <person name="Makarova K.S."/>
            <person name="Zeng Q."/>
            <person name="Gibson R."/>
            <person name="Lee H.M."/>
            <person name="Dubois J."/>
            <person name="Qiu D."/>
            <person name="Hitti J."/>
            <person name="Wolf Y.I."/>
            <person name="Tatusov R.L."/>
            <person name="Sabathe F."/>
            <person name="Doucette-Stamm L.A."/>
            <person name="Soucaille P."/>
            <person name="Daly M.J."/>
            <person name="Bennett G.N."/>
            <person name="Koonin E.V."/>
            <person name="Smith D.R."/>
        </authorList>
    </citation>
    <scope>NUCLEOTIDE SEQUENCE [LARGE SCALE GENOMIC DNA]</scope>
    <source>
        <strain>ATCC 824 / DSM 792 / JCM 1419 / IAM 19013 / LMG 5710 / NBRC 13948 / NRRL B-527 / VKM B-1787 / 2291 / W</strain>
    </source>
</reference>
<proteinExistence type="inferred from homology"/>
<accession>Q97I64</accession>
<evidence type="ECO:0000255" key="1">
    <source>
        <dbReference type="HAMAP-Rule" id="MF_01220"/>
    </source>
</evidence>
<feature type="chain" id="PRO_0000143837" description="Uridylate kinase">
    <location>
        <begin position="1"/>
        <end position="236"/>
    </location>
</feature>
<feature type="region of interest" description="Involved in allosteric activation by GTP" evidence="1">
    <location>
        <begin position="20"/>
        <end position="25"/>
    </location>
</feature>
<feature type="binding site" evidence="1">
    <location>
        <begin position="12"/>
        <end position="15"/>
    </location>
    <ligand>
        <name>ATP</name>
        <dbReference type="ChEBI" id="CHEBI:30616"/>
    </ligand>
</feature>
<feature type="binding site" evidence="1">
    <location>
        <position position="54"/>
    </location>
    <ligand>
        <name>UMP</name>
        <dbReference type="ChEBI" id="CHEBI:57865"/>
    </ligand>
</feature>
<feature type="binding site" evidence="1">
    <location>
        <position position="55"/>
    </location>
    <ligand>
        <name>ATP</name>
        <dbReference type="ChEBI" id="CHEBI:30616"/>
    </ligand>
</feature>
<feature type="binding site" evidence="1">
    <location>
        <position position="59"/>
    </location>
    <ligand>
        <name>ATP</name>
        <dbReference type="ChEBI" id="CHEBI:30616"/>
    </ligand>
</feature>
<feature type="binding site" evidence="1">
    <location>
        <position position="72"/>
    </location>
    <ligand>
        <name>UMP</name>
        <dbReference type="ChEBI" id="CHEBI:57865"/>
    </ligand>
</feature>
<feature type="binding site" evidence="1">
    <location>
        <begin position="133"/>
        <end position="140"/>
    </location>
    <ligand>
        <name>UMP</name>
        <dbReference type="ChEBI" id="CHEBI:57865"/>
    </ligand>
</feature>
<feature type="binding site" evidence="1">
    <location>
        <position position="166"/>
    </location>
    <ligand>
        <name>ATP</name>
        <dbReference type="ChEBI" id="CHEBI:30616"/>
    </ligand>
</feature>
<feature type="binding site" evidence="1">
    <location>
        <position position="169"/>
    </location>
    <ligand>
        <name>ATP</name>
        <dbReference type="ChEBI" id="CHEBI:30616"/>
    </ligand>
</feature>